<keyword id="KW-0378">Hydrolase</keyword>
<accession>A9W3H8</accession>
<feature type="chain" id="PRO_0000402973" description="Putative carbamate hydrolase RutD">
    <location>
        <begin position="1"/>
        <end position="260"/>
    </location>
</feature>
<feature type="domain" description="AB hydrolase-1" evidence="1">
    <location>
        <begin position="17"/>
        <end position="117"/>
    </location>
</feature>
<name>RUTD_METEP</name>
<organism>
    <name type="scientific">Methylorubrum extorquens (strain PA1)</name>
    <name type="common">Methylobacterium extorquens</name>
    <dbReference type="NCBI Taxonomy" id="419610"/>
    <lineage>
        <taxon>Bacteria</taxon>
        <taxon>Pseudomonadati</taxon>
        <taxon>Pseudomonadota</taxon>
        <taxon>Alphaproteobacteria</taxon>
        <taxon>Hyphomicrobiales</taxon>
        <taxon>Methylobacteriaceae</taxon>
        <taxon>Methylorubrum</taxon>
    </lineage>
</organism>
<sequence length="260" mass="27631">MAAPVHHEVHGPAGGRTVLLSPGLGGSAHYFAPQVPVLAERFRVVTYDHRGTGRSPGPLEPGHDIAAMARDVLDLLDLLDIGTADIVGHALGGLIALQLALTHPERVGRIVVINGWAVMDLATRRCFAARKALLRHAGPEAFVRAQAIFLYPAPWLSENAARVADDEAQALAHFPGEETVLARIAALETFDATGALPRIPHETLLMAARDDVLVPYTASDILAAGLPNARLDLAPEGGHAHSVTRPEAFNRTLLDFLASP</sequence>
<gene>
    <name evidence="1" type="primary">rutD</name>
    <name type="ordered locus">Mext_1735</name>
</gene>
<comment type="function">
    <text evidence="1">Involved in pyrimidine catabolism. May facilitate the hydrolysis of carbamate, a reaction that can also occur spontaneously.</text>
</comment>
<comment type="catalytic activity">
    <reaction evidence="1">
        <text>carbamate + 2 H(+) = NH4(+) + CO2</text>
        <dbReference type="Rhea" id="RHEA:15649"/>
        <dbReference type="ChEBI" id="CHEBI:13941"/>
        <dbReference type="ChEBI" id="CHEBI:15378"/>
        <dbReference type="ChEBI" id="CHEBI:16526"/>
        <dbReference type="ChEBI" id="CHEBI:28938"/>
    </reaction>
</comment>
<comment type="similarity">
    <text evidence="1">Belongs to the AB hydrolase superfamily. Hydrolase RutD family.</text>
</comment>
<proteinExistence type="inferred from homology"/>
<dbReference type="EC" id="3.5.1.-" evidence="1"/>
<dbReference type="EMBL" id="CP000908">
    <property type="protein sequence ID" value="ABY30134.1"/>
    <property type="molecule type" value="Genomic_DNA"/>
</dbReference>
<dbReference type="RefSeq" id="WP_012253314.1">
    <property type="nucleotide sequence ID" value="NC_010172.1"/>
</dbReference>
<dbReference type="SMR" id="A9W3H8"/>
<dbReference type="ESTHER" id="metep-rutd">
    <property type="family name" value="RutD"/>
</dbReference>
<dbReference type="KEGG" id="mex:Mext_1735"/>
<dbReference type="eggNOG" id="COG2267">
    <property type="taxonomic scope" value="Bacteria"/>
</dbReference>
<dbReference type="HOGENOM" id="CLU_020336_50_1_5"/>
<dbReference type="BioCyc" id="MEXT419610:MEXT_RS08805-MONOMER"/>
<dbReference type="GO" id="GO:0016020">
    <property type="term" value="C:membrane"/>
    <property type="evidence" value="ECO:0007669"/>
    <property type="project" value="TreeGrafter"/>
</dbReference>
<dbReference type="GO" id="GO:0016811">
    <property type="term" value="F:hydrolase activity, acting on carbon-nitrogen (but not peptide) bonds, in linear amides"/>
    <property type="evidence" value="ECO:0007669"/>
    <property type="project" value="InterPro"/>
</dbReference>
<dbReference type="GO" id="GO:0019740">
    <property type="term" value="P:nitrogen utilization"/>
    <property type="evidence" value="ECO:0007669"/>
    <property type="project" value="UniProtKB-UniRule"/>
</dbReference>
<dbReference type="GO" id="GO:0006212">
    <property type="term" value="P:uracil catabolic process"/>
    <property type="evidence" value="ECO:0007669"/>
    <property type="project" value="UniProtKB-UniRule"/>
</dbReference>
<dbReference type="Gene3D" id="3.40.50.1820">
    <property type="entry name" value="alpha/beta hydrolase"/>
    <property type="match status" value="1"/>
</dbReference>
<dbReference type="HAMAP" id="MF_00832">
    <property type="entry name" value="RutD"/>
    <property type="match status" value="1"/>
</dbReference>
<dbReference type="InterPro" id="IPR000073">
    <property type="entry name" value="AB_hydrolase_1"/>
</dbReference>
<dbReference type="InterPro" id="IPR029058">
    <property type="entry name" value="AB_hydrolase_fold"/>
</dbReference>
<dbReference type="InterPro" id="IPR050266">
    <property type="entry name" value="AB_hydrolase_sf"/>
</dbReference>
<dbReference type="InterPro" id="IPR019913">
    <property type="entry name" value="Pyrimidine_utilisation_RutD"/>
</dbReference>
<dbReference type="NCBIfam" id="TIGR03611">
    <property type="entry name" value="RutD"/>
    <property type="match status" value="1"/>
</dbReference>
<dbReference type="PANTHER" id="PTHR43798:SF33">
    <property type="entry name" value="HYDROLASE, PUTATIVE (AFU_ORTHOLOGUE AFUA_2G14860)-RELATED"/>
    <property type="match status" value="1"/>
</dbReference>
<dbReference type="PANTHER" id="PTHR43798">
    <property type="entry name" value="MONOACYLGLYCEROL LIPASE"/>
    <property type="match status" value="1"/>
</dbReference>
<dbReference type="Pfam" id="PF00561">
    <property type="entry name" value="Abhydrolase_1"/>
    <property type="match status" value="1"/>
</dbReference>
<dbReference type="PRINTS" id="PR00111">
    <property type="entry name" value="ABHYDROLASE"/>
</dbReference>
<dbReference type="SUPFAM" id="SSF53474">
    <property type="entry name" value="alpha/beta-Hydrolases"/>
    <property type="match status" value="1"/>
</dbReference>
<evidence type="ECO:0000255" key="1">
    <source>
        <dbReference type="HAMAP-Rule" id="MF_00832"/>
    </source>
</evidence>
<protein>
    <recommendedName>
        <fullName evidence="1">Putative carbamate hydrolase RutD</fullName>
        <ecNumber evidence="1">3.5.1.-</ecNumber>
    </recommendedName>
    <alternativeName>
        <fullName evidence="1">Aminohydrolase</fullName>
    </alternativeName>
</protein>
<reference key="1">
    <citation type="submission" date="2007-12" db="EMBL/GenBank/DDBJ databases">
        <title>Complete sequence of Methylobacterium extorquens PA1.</title>
        <authorList>
            <consortium name="US DOE Joint Genome Institute"/>
            <person name="Copeland A."/>
            <person name="Lucas S."/>
            <person name="Lapidus A."/>
            <person name="Barry K."/>
            <person name="Glavina del Rio T."/>
            <person name="Dalin E."/>
            <person name="Tice H."/>
            <person name="Pitluck S."/>
            <person name="Saunders E."/>
            <person name="Brettin T."/>
            <person name="Bruce D."/>
            <person name="Detter J.C."/>
            <person name="Han C."/>
            <person name="Schmutz J."/>
            <person name="Larimer F."/>
            <person name="Land M."/>
            <person name="Hauser L."/>
            <person name="Kyrpides N."/>
            <person name="Kim E."/>
            <person name="Marx C."/>
            <person name="Richardson P."/>
        </authorList>
    </citation>
    <scope>NUCLEOTIDE SEQUENCE [LARGE SCALE GENOMIC DNA]</scope>
    <source>
        <strain>PA1</strain>
    </source>
</reference>